<protein>
    <recommendedName>
        <fullName evidence="1">Fructose-1,6-bisphosphatase class 1 2</fullName>
        <shortName evidence="1">FBPase class 1 2</shortName>
        <ecNumber evidence="1">3.1.3.11</ecNumber>
    </recommendedName>
    <alternativeName>
        <fullName evidence="1">D-fructose-1,6-bisphosphate 1-phosphohydrolase class 1 2</fullName>
    </alternativeName>
</protein>
<gene>
    <name evidence="1" type="primary">fbp2</name>
    <name type="ordered locus">GFO_3521</name>
</gene>
<keyword id="KW-0119">Carbohydrate metabolism</keyword>
<keyword id="KW-0963">Cytoplasm</keyword>
<keyword id="KW-0378">Hydrolase</keyword>
<keyword id="KW-0460">Magnesium</keyword>
<keyword id="KW-0479">Metal-binding</keyword>
<organism>
    <name type="scientific">Christiangramia forsetii (strain DSM 17595 / CGMCC 1.15422 / KT0803)</name>
    <name type="common">Gramella forsetii</name>
    <dbReference type="NCBI Taxonomy" id="411154"/>
    <lineage>
        <taxon>Bacteria</taxon>
        <taxon>Pseudomonadati</taxon>
        <taxon>Bacteroidota</taxon>
        <taxon>Flavobacteriia</taxon>
        <taxon>Flavobacteriales</taxon>
        <taxon>Flavobacteriaceae</taxon>
        <taxon>Christiangramia</taxon>
    </lineage>
</organism>
<name>F16A2_CHRFK</name>
<proteinExistence type="inferred from homology"/>
<feature type="chain" id="PRO_0000364564" description="Fructose-1,6-bisphosphatase class 1 2">
    <location>
        <begin position="1"/>
        <end position="348"/>
    </location>
</feature>
<feature type="binding site" evidence="1">
    <location>
        <position position="93"/>
    </location>
    <ligand>
        <name>Mg(2+)</name>
        <dbReference type="ChEBI" id="CHEBI:18420"/>
        <label>1</label>
    </ligand>
</feature>
<feature type="binding site" evidence="1">
    <location>
        <position position="117"/>
    </location>
    <ligand>
        <name>Mg(2+)</name>
        <dbReference type="ChEBI" id="CHEBI:18420"/>
        <label>1</label>
    </ligand>
</feature>
<feature type="binding site" evidence="1">
    <location>
        <position position="117"/>
    </location>
    <ligand>
        <name>Mg(2+)</name>
        <dbReference type="ChEBI" id="CHEBI:18420"/>
        <label>2</label>
    </ligand>
</feature>
<feature type="binding site" evidence="1">
    <location>
        <position position="119"/>
    </location>
    <ligand>
        <name>Mg(2+)</name>
        <dbReference type="ChEBI" id="CHEBI:18420"/>
        <label>1</label>
    </ligand>
</feature>
<feature type="binding site" evidence="1">
    <location>
        <begin position="120"/>
        <end position="123"/>
    </location>
    <ligand>
        <name>substrate</name>
    </ligand>
</feature>
<feature type="binding site" evidence="1">
    <location>
        <position position="120"/>
    </location>
    <ligand>
        <name>Mg(2+)</name>
        <dbReference type="ChEBI" id="CHEBI:18420"/>
        <label>2</label>
    </ligand>
</feature>
<feature type="binding site" evidence="1">
    <location>
        <position position="213"/>
    </location>
    <ligand>
        <name>substrate</name>
    </ligand>
</feature>
<feature type="binding site" evidence="1">
    <location>
        <position position="244"/>
    </location>
    <ligand>
        <name>substrate</name>
    </ligand>
</feature>
<feature type="binding site" evidence="1">
    <location>
        <position position="274"/>
    </location>
    <ligand>
        <name>substrate</name>
    </ligand>
</feature>
<feature type="binding site" evidence="1">
    <location>
        <position position="280"/>
    </location>
    <ligand>
        <name>Mg(2+)</name>
        <dbReference type="ChEBI" id="CHEBI:18420"/>
        <label>2</label>
    </ligand>
</feature>
<comment type="catalytic activity">
    <reaction evidence="1">
        <text>beta-D-fructose 1,6-bisphosphate + H2O = beta-D-fructose 6-phosphate + phosphate</text>
        <dbReference type="Rhea" id="RHEA:11064"/>
        <dbReference type="ChEBI" id="CHEBI:15377"/>
        <dbReference type="ChEBI" id="CHEBI:32966"/>
        <dbReference type="ChEBI" id="CHEBI:43474"/>
        <dbReference type="ChEBI" id="CHEBI:57634"/>
        <dbReference type="EC" id="3.1.3.11"/>
    </reaction>
</comment>
<comment type="cofactor">
    <cofactor evidence="1">
        <name>Mg(2+)</name>
        <dbReference type="ChEBI" id="CHEBI:18420"/>
    </cofactor>
    <text evidence="1">Binds 2 magnesium ions per subunit.</text>
</comment>
<comment type="pathway">
    <text evidence="1">Carbohydrate biosynthesis; gluconeogenesis.</text>
</comment>
<comment type="subunit">
    <text evidence="1">Homotetramer.</text>
</comment>
<comment type="subcellular location">
    <subcellularLocation>
        <location evidence="1">Cytoplasm</location>
    </subcellularLocation>
</comment>
<comment type="similarity">
    <text evidence="1">Belongs to the FBPase class 1 family.</text>
</comment>
<reference key="1">
    <citation type="journal article" date="2006" name="Environ. Microbiol.">
        <title>Whole genome analysis of the marine Bacteroidetes'Gramella forsetii' reveals adaptations to degradation of polymeric organic matter.</title>
        <authorList>
            <person name="Bauer M."/>
            <person name="Kube M."/>
            <person name="Teeling H."/>
            <person name="Richter M."/>
            <person name="Lombardot T."/>
            <person name="Allers E."/>
            <person name="Wuerdemann C.A."/>
            <person name="Quast C."/>
            <person name="Kuhl H."/>
            <person name="Knaust F."/>
            <person name="Woebken D."/>
            <person name="Bischof K."/>
            <person name="Mussmann M."/>
            <person name="Choudhuri J.V."/>
            <person name="Meyer F."/>
            <person name="Reinhardt R."/>
            <person name="Amann R.I."/>
            <person name="Gloeckner F.O."/>
        </authorList>
    </citation>
    <scope>NUCLEOTIDE SEQUENCE [LARGE SCALE GENOMIC DNA]</scope>
    <source>
        <strain>DSM 17595 / CGMCC 1.15422 / KT0803</strain>
    </source>
</reference>
<evidence type="ECO:0000255" key="1">
    <source>
        <dbReference type="HAMAP-Rule" id="MF_01855"/>
    </source>
</evidence>
<dbReference type="EC" id="3.1.3.11" evidence="1"/>
<dbReference type="EMBL" id="CU207366">
    <property type="protein sequence ID" value="CAL68459.1"/>
    <property type="molecule type" value="Genomic_DNA"/>
</dbReference>
<dbReference type="RefSeq" id="WP_011711360.1">
    <property type="nucleotide sequence ID" value="NC_008571.1"/>
</dbReference>
<dbReference type="SMR" id="A0M764"/>
<dbReference type="STRING" id="411154.GFO_3521"/>
<dbReference type="KEGG" id="gfo:GFO_3521"/>
<dbReference type="eggNOG" id="COG0158">
    <property type="taxonomic scope" value="Bacteria"/>
</dbReference>
<dbReference type="HOGENOM" id="CLU_039977_2_2_10"/>
<dbReference type="OrthoDB" id="9806756at2"/>
<dbReference type="UniPathway" id="UPA00138"/>
<dbReference type="Proteomes" id="UP000000755">
    <property type="component" value="Chromosome"/>
</dbReference>
<dbReference type="GO" id="GO:0005829">
    <property type="term" value="C:cytosol"/>
    <property type="evidence" value="ECO:0007669"/>
    <property type="project" value="TreeGrafter"/>
</dbReference>
<dbReference type="GO" id="GO:0042132">
    <property type="term" value="F:fructose 1,6-bisphosphate 1-phosphatase activity"/>
    <property type="evidence" value="ECO:0007669"/>
    <property type="project" value="UniProtKB-UniRule"/>
</dbReference>
<dbReference type="GO" id="GO:0000287">
    <property type="term" value="F:magnesium ion binding"/>
    <property type="evidence" value="ECO:0007669"/>
    <property type="project" value="UniProtKB-UniRule"/>
</dbReference>
<dbReference type="GO" id="GO:0030388">
    <property type="term" value="P:fructose 1,6-bisphosphate metabolic process"/>
    <property type="evidence" value="ECO:0007669"/>
    <property type="project" value="TreeGrafter"/>
</dbReference>
<dbReference type="GO" id="GO:0006002">
    <property type="term" value="P:fructose 6-phosphate metabolic process"/>
    <property type="evidence" value="ECO:0007669"/>
    <property type="project" value="TreeGrafter"/>
</dbReference>
<dbReference type="GO" id="GO:0006000">
    <property type="term" value="P:fructose metabolic process"/>
    <property type="evidence" value="ECO:0007669"/>
    <property type="project" value="TreeGrafter"/>
</dbReference>
<dbReference type="GO" id="GO:0006094">
    <property type="term" value="P:gluconeogenesis"/>
    <property type="evidence" value="ECO:0007669"/>
    <property type="project" value="UniProtKB-UniRule"/>
</dbReference>
<dbReference type="GO" id="GO:0005986">
    <property type="term" value="P:sucrose biosynthetic process"/>
    <property type="evidence" value="ECO:0007669"/>
    <property type="project" value="TreeGrafter"/>
</dbReference>
<dbReference type="CDD" id="cd00354">
    <property type="entry name" value="FBPase"/>
    <property type="match status" value="1"/>
</dbReference>
<dbReference type="FunFam" id="3.30.540.10:FF:000002">
    <property type="entry name" value="Fructose-1,6-bisphosphatase class 1"/>
    <property type="match status" value="1"/>
</dbReference>
<dbReference type="FunFam" id="3.40.190.80:FF:000001">
    <property type="entry name" value="Fructose-1,6-bisphosphatase class 1"/>
    <property type="match status" value="1"/>
</dbReference>
<dbReference type="Gene3D" id="3.40.190.80">
    <property type="match status" value="1"/>
</dbReference>
<dbReference type="Gene3D" id="3.30.540.10">
    <property type="entry name" value="Fructose-1,6-Bisphosphatase, subunit A, domain 1"/>
    <property type="match status" value="1"/>
</dbReference>
<dbReference type="HAMAP" id="MF_01855">
    <property type="entry name" value="FBPase_class1"/>
    <property type="match status" value="1"/>
</dbReference>
<dbReference type="InterPro" id="IPR044015">
    <property type="entry name" value="FBPase_C_dom"/>
</dbReference>
<dbReference type="InterPro" id="IPR000146">
    <property type="entry name" value="FBPase_class-1"/>
</dbReference>
<dbReference type="InterPro" id="IPR033391">
    <property type="entry name" value="FBPase_N"/>
</dbReference>
<dbReference type="InterPro" id="IPR028343">
    <property type="entry name" value="FBPtase"/>
</dbReference>
<dbReference type="NCBIfam" id="NF006778">
    <property type="entry name" value="PRK09293.1-1"/>
    <property type="match status" value="1"/>
</dbReference>
<dbReference type="NCBIfam" id="NF006779">
    <property type="entry name" value="PRK09293.1-3"/>
    <property type="match status" value="1"/>
</dbReference>
<dbReference type="PANTHER" id="PTHR11556">
    <property type="entry name" value="FRUCTOSE-1,6-BISPHOSPHATASE-RELATED"/>
    <property type="match status" value="1"/>
</dbReference>
<dbReference type="PANTHER" id="PTHR11556:SF35">
    <property type="entry name" value="SEDOHEPTULOSE-1,7-BISPHOSPHATASE, CHLOROPLASTIC"/>
    <property type="match status" value="1"/>
</dbReference>
<dbReference type="Pfam" id="PF00316">
    <property type="entry name" value="FBPase"/>
    <property type="match status" value="1"/>
</dbReference>
<dbReference type="Pfam" id="PF18913">
    <property type="entry name" value="FBPase_C"/>
    <property type="match status" value="1"/>
</dbReference>
<dbReference type="PIRSF" id="PIRSF500210">
    <property type="entry name" value="FBPtase"/>
    <property type="match status" value="1"/>
</dbReference>
<dbReference type="PIRSF" id="PIRSF000904">
    <property type="entry name" value="FBPtase_SBPase"/>
    <property type="match status" value="1"/>
</dbReference>
<dbReference type="PRINTS" id="PR00115">
    <property type="entry name" value="F16BPHPHTASE"/>
</dbReference>
<dbReference type="SUPFAM" id="SSF56655">
    <property type="entry name" value="Carbohydrate phosphatase"/>
    <property type="match status" value="1"/>
</dbReference>
<sequence>MSKPNQTLGEFIIENQSDFPGSSGELSRLINSLRLAAKVVNHEVNKAGLVDIIGAYGETNVQGEDQQKLDVYANNKFIQTLTNREIVCGIASEENDDFIQIEGHKGDHQNKYVVLMDPLDGSSNIDVNVSVGTIFSIYQRVTPVGTPVQKEDFLQPGNKQVAAGYIIYGTSTMLVYTTGHGVNGFTLNPALGSWYLSHPDMKFPEEGQIYSINEGNYIHFPQGVKDYIKYCQQEEGNRPYTSRYIGSMVSDIHRNMIKGGIFMYPKSSKASEGKLRLLYECNPFAFITEQAGGKASDGFQRIMDIDPTELHQRVPFFCGSKKMVEKAEEFMANAKANPQSQEFSFSSK</sequence>
<accession>A0M764</accession>